<feature type="chain" id="PRO_1000025912" description="RNA-binding protein Hfq">
    <location>
        <begin position="1"/>
        <end position="91"/>
    </location>
</feature>
<feature type="domain" description="Sm" evidence="2">
    <location>
        <begin position="9"/>
        <end position="68"/>
    </location>
</feature>
<feature type="region of interest" description="Disordered" evidence="3">
    <location>
        <begin position="68"/>
        <end position="91"/>
    </location>
</feature>
<gene>
    <name evidence="1" type="primary">hfq</name>
    <name type="ordered locus">CGSHiGG_05240</name>
</gene>
<proteinExistence type="inferred from homology"/>
<organism>
    <name type="scientific">Haemophilus influenzae (strain PittGG)</name>
    <dbReference type="NCBI Taxonomy" id="374931"/>
    <lineage>
        <taxon>Bacteria</taxon>
        <taxon>Pseudomonadati</taxon>
        <taxon>Pseudomonadota</taxon>
        <taxon>Gammaproteobacteria</taxon>
        <taxon>Pasteurellales</taxon>
        <taxon>Pasteurellaceae</taxon>
        <taxon>Haemophilus</taxon>
    </lineage>
</organism>
<accession>A5UGS5</accession>
<dbReference type="EMBL" id="CP000672">
    <property type="protein sequence ID" value="ABQ99980.1"/>
    <property type="molecule type" value="Genomic_DNA"/>
</dbReference>
<dbReference type="SMR" id="A5UGS5"/>
<dbReference type="KEGG" id="hiq:CGSHiGG_05240"/>
<dbReference type="HOGENOM" id="CLU_113688_2_2_6"/>
<dbReference type="Proteomes" id="UP000001990">
    <property type="component" value="Chromosome"/>
</dbReference>
<dbReference type="GO" id="GO:0005829">
    <property type="term" value="C:cytosol"/>
    <property type="evidence" value="ECO:0007669"/>
    <property type="project" value="TreeGrafter"/>
</dbReference>
<dbReference type="GO" id="GO:0003723">
    <property type="term" value="F:RNA binding"/>
    <property type="evidence" value="ECO:0007669"/>
    <property type="project" value="UniProtKB-UniRule"/>
</dbReference>
<dbReference type="GO" id="GO:0006355">
    <property type="term" value="P:regulation of DNA-templated transcription"/>
    <property type="evidence" value="ECO:0007669"/>
    <property type="project" value="InterPro"/>
</dbReference>
<dbReference type="GO" id="GO:0043487">
    <property type="term" value="P:regulation of RNA stability"/>
    <property type="evidence" value="ECO:0007669"/>
    <property type="project" value="TreeGrafter"/>
</dbReference>
<dbReference type="GO" id="GO:0045974">
    <property type="term" value="P:regulation of translation, ncRNA-mediated"/>
    <property type="evidence" value="ECO:0007669"/>
    <property type="project" value="TreeGrafter"/>
</dbReference>
<dbReference type="CDD" id="cd01716">
    <property type="entry name" value="Hfq"/>
    <property type="match status" value="1"/>
</dbReference>
<dbReference type="FunFam" id="2.30.30.100:FF:000001">
    <property type="entry name" value="RNA-binding protein Hfq"/>
    <property type="match status" value="1"/>
</dbReference>
<dbReference type="Gene3D" id="2.30.30.100">
    <property type="match status" value="1"/>
</dbReference>
<dbReference type="HAMAP" id="MF_00436">
    <property type="entry name" value="Hfq"/>
    <property type="match status" value="1"/>
</dbReference>
<dbReference type="InterPro" id="IPR005001">
    <property type="entry name" value="Hfq"/>
</dbReference>
<dbReference type="InterPro" id="IPR010920">
    <property type="entry name" value="LSM_dom_sf"/>
</dbReference>
<dbReference type="InterPro" id="IPR047575">
    <property type="entry name" value="Sm"/>
</dbReference>
<dbReference type="NCBIfam" id="TIGR02383">
    <property type="entry name" value="Hfq"/>
    <property type="match status" value="1"/>
</dbReference>
<dbReference type="NCBIfam" id="NF001602">
    <property type="entry name" value="PRK00395.1"/>
    <property type="match status" value="1"/>
</dbReference>
<dbReference type="PANTHER" id="PTHR34772">
    <property type="entry name" value="RNA-BINDING PROTEIN HFQ"/>
    <property type="match status" value="1"/>
</dbReference>
<dbReference type="PANTHER" id="PTHR34772:SF1">
    <property type="entry name" value="RNA-BINDING PROTEIN HFQ"/>
    <property type="match status" value="1"/>
</dbReference>
<dbReference type="Pfam" id="PF17209">
    <property type="entry name" value="Hfq"/>
    <property type="match status" value="1"/>
</dbReference>
<dbReference type="SUPFAM" id="SSF50182">
    <property type="entry name" value="Sm-like ribonucleoproteins"/>
    <property type="match status" value="1"/>
</dbReference>
<dbReference type="PROSITE" id="PS52002">
    <property type="entry name" value="SM"/>
    <property type="match status" value="1"/>
</dbReference>
<name>HFQ_HAEIG</name>
<keyword id="KW-0694">RNA-binding</keyword>
<keyword id="KW-0346">Stress response</keyword>
<comment type="function">
    <text evidence="1">RNA chaperone that binds small regulatory RNA (sRNAs) and mRNAs to facilitate mRNA translational regulation in response to envelope stress, environmental stress and changes in metabolite concentrations. Also binds with high specificity to tRNAs.</text>
</comment>
<comment type="subunit">
    <text evidence="1">Homohexamer.</text>
</comment>
<comment type="similarity">
    <text evidence="1">Belongs to the Hfq family.</text>
</comment>
<protein>
    <recommendedName>
        <fullName evidence="1">RNA-binding protein Hfq</fullName>
    </recommendedName>
</protein>
<evidence type="ECO:0000255" key="1">
    <source>
        <dbReference type="HAMAP-Rule" id="MF_00436"/>
    </source>
</evidence>
<evidence type="ECO:0000255" key="2">
    <source>
        <dbReference type="PROSITE-ProRule" id="PRU01346"/>
    </source>
</evidence>
<evidence type="ECO:0000256" key="3">
    <source>
        <dbReference type="SAM" id="MobiDB-lite"/>
    </source>
</evidence>
<sequence>MAKGQSLQDPYLNALRRERIPVSIYLVNGIKLQGQIESFDQFVILLKNTVNQMVYKHAISTVVPARSVSHHNNNHHTTPTEAVENVETQAE</sequence>
<reference key="1">
    <citation type="journal article" date="2007" name="Genome Biol.">
        <title>Characterization and modeling of the Haemophilus influenzae core and supragenomes based on the complete genomic sequences of Rd and 12 clinical nontypeable strains.</title>
        <authorList>
            <person name="Hogg J.S."/>
            <person name="Hu F.Z."/>
            <person name="Janto B."/>
            <person name="Boissy R."/>
            <person name="Hayes J."/>
            <person name="Keefe R."/>
            <person name="Post J.C."/>
            <person name="Ehrlich G.D."/>
        </authorList>
    </citation>
    <scope>NUCLEOTIDE SEQUENCE [LARGE SCALE GENOMIC DNA]</scope>
    <source>
        <strain>PittGG</strain>
    </source>
</reference>